<protein>
    <recommendedName>
        <fullName evidence="2">D-alanine--D-alanine ligase A</fullName>
        <ecNumber evidence="2">6.3.2.4</ecNumber>
    </recommendedName>
    <alternativeName>
        <fullName evidence="2">D-Ala-D-Ala ligase A</fullName>
    </alternativeName>
    <alternativeName>
        <fullName evidence="2">D-alanylalanine synthetase A</fullName>
    </alternativeName>
</protein>
<evidence type="ECO:0000250" key="1"/>
<evidence type="ECO:0000255" key="2">
    <source>
        <dbReference type="HAMAP-Rule" id="MF_00047"/>
    </source>
</evidence>
<name>DDLA_BACCR</name>
<keyword id="KW-0067">ATP-binding</keyword>
<keyword id="KW-0133">Cell shape</keyword>
<keyword id="KW-0961">Cell wall biogenesis/degradation</keyword>
<keyword id="KW-0963">Cytoplasm</keyword>
<keyword id="KW-0436">Ligase</keyword>
<keyword id="KW-0460">Magnesium</keyword>
<keyword id="KW-0464">Manganese</keyword>
<keyword id="KW-0479">Metal-binding</keyword>
<keyword id="KW-0547">Nucleotide-binding</keyword>
<keyword id="KW-0573">Peptidoglycan synthesis</keyword>
<keyword id="KW-1185">Reference proteome</keyword>
<gene>
    <name evidence="2" type="primary">ddlA</name>
    <name type="ordered locus">BC_2550</name>
</gene>
<reference key="1">
    <citation type="journal article" date="2003" name="Nature">
        <title>Genome sequence of Bacillus cereus and comparative analysis with Bacillus anthracis.</title>
        <authorList>
            <person name="Ivanova N."/>
            <person name="Sorokin A."/>
            <person name="Anderson I."/>
            <person name="Galleron N."/>
            <person name="Candelon B."/>
            <person name="Kapatral V."/>
            <person name="Bhattacharyya A."/>
            <person name="Reznik G."/>
            <person name="Mikhailova N."/>
            <person name="Lapidus A."/>
            <person name="Chu L."/>
            <person name="Mazur M."/>
            <person name="Goltsman E."/>
            <person name="Larsen N."/>
            <person name="D'Souza M."/>
            <person name="Walunas T."/>
            <person name="Grechkin Y."/>
            <person name="Pusch G."/>
            <person name="Haselkorn R."/>
            <person name="Fonstein M."/>
            <person name="Ehrlich S.D."/>
            <person name="Overbeek R."/>
            <person name="Kyrpides N.C."/>
        </authorList>
    </citation>
    <scope>NUCLEOTIDE SEQUENCE [LARGE SCALE GENOMIC DNA]</scope>
    <source>
        <strain>ATCC 14579 / DSM 31 / CCUG 7414 / JCM 2152 / NBRC 15305 / NCIMB 9373 / NCTC 2599 / NRRL B-3711</strain>
    </source>
</reference>
<feature type="chain" id="PRO_0000177782" description="D-alanine--D-alanine ligase A">
    <location>
        <begin position="1"/>
        <end position="301"/>
    </location>
</feature>
<feature type="domain" description="ATP-grasp" evidence="2">
    <location>
        <begin position="96"/>
        <end position="290"/>
    </location>
</feature>
<feature type="binding site" evidence="2">
    <location>
        <begin position="123"/>
        <end position="178"/>
    </location>
    <ligand>
        <name>ATP</name>
        <dbReference type="ChEBI" id="CHEBI:30616"/>
    </ligand>
</feature>
<feature type="binding site" evidence="2">
    <location>
        <position position="245"/>
    </location>
    <ligand>
        <name>Mg(2+)</name>
        <dbReference type="ChEBI" id="CHEBI:18420"/>
        <label>1</label>
    </ligand>
</feature>
<feature type="binding site" evidence="2">
    <location>
        <position position="257"/>
    </location>
    <ligand>
        <name>Mg(2+)</name>
        <dbReference type="ChEBI" id="CHEBI:18420"/>
        <label>1</label>
    </ligand>
</feature>
<feature type="binding site" evidence="2">
    <location>
        <position position="257"/>
    </location>
    <ligand>
        <name>Mg(2+)</name>
        <dbReference type="ChEBI" id="CHEBI:18420"/>
        <label>2</label>
    </ligand>
</feature>
<feature type="binding site" evidence="2">
    <location>
        <position position="259"/>
    </location>
    <ligand>
        <name>Mg(2+)</name>
        <dbReference type="ChEBI" id="CHEBI:18420"/>
        <label>2</label>
    </ligand>
</feature>
<dbReference type="EC" id="6.3.2.4" evidence="2"/>
<dbReference type="EMBL" id="AE016877">
    <property type="protein sequence ID" value="AAP09509.1"/>
    <property type="molecule type" value="Genomic_DNA"/>
</dbReference>
<dbReference type="RefSeq" id="NP_832308.1">
    <property type="nucleotide sequence ID" value="NC_004722.1"/>
</dbReference>
<dbReference type="SMR" id="Q81D33"/>
<dbReference type="STRING" id="226900.BC_2550"/>
<dbReference type="KEGG" id="bce:BC2550"/>
<dbReference type="PATRIC" id="fig|226900.8.peg.2589"/>
<dbReference type="HOGENOM" id="CLU_039268_1_1_9"/>
<dbReference type="UniPathway" id="UPA00219"/>
<dbReference type="Proteomes" id="UP000001417">
    <property type="component" value="Chromosome"/>
</dbReference>
<dbReference type="GO" id="GO:0005737">
    <property type="term" value="C:cytoplasm"/>
    <property type="evidence" value="ECO:0007669"/>
    <property type="project" value="UniProtKB-SubCell"/>
</dbReference>
<dbReference type="GO" id="GO:0005524">
    <property type="term" value="F:ATP binding"/>
    <property type="evidence" value="ECO:0007669"/>
    <property type="project" value="UniProtKB-KW"/>
</dbReference>
<dbReference type="GO" id="GO:0008716">
    <property type="term" value="F:D-alanine-D-alanine ligase activity"/>
    <property type="evidence" value="ECO:0000318"/>
    <property type="project" value="GO_Central"/>
</dbReference>
<dbReference type="GO" id="GO:0046872">
    <property type="term" value="F:metal ion binding"/>
    <property type="evidence" value="ECO:0007669"/>
    <property type="project" value="UniProtKB-KW"/>
</dbReference>
<dbReference type="GO" id="GO:0071555">
    <property type="term" value="P:cell wall organization"/>
    <property type="evidence" value="ECO:0007669"/>
    <property type="project" value="UniProtKB-KW"/>
</dbReference>
<dbReference type="GO" id="GO:0009252">
    <property type="term" value="P:peptidoglycan biosynthetic process"/>
    <property type="evidence" value="ECO:0007669"/>
    <property type="project" value="UniProtKB-UniRule"/>
</dbReference>
<dbReference type="GO" id="GO:0008360">
    <property type="term" value="P:regulation of cell shape"/>
    <property type="evidence" value="ECO:0007669"/>
    <property type="project" value="UniProtKB-KW"/>
</dbReference>
<dbReference type="FunFam" id="3.30.470.20:FF:000074">
    <property type="entry name" value="D-alanine--D-alanine ligase"/>
    <property type="match status" value="1"/>
</dbReference>
<dbReference type="FunFam" id="3.40.50.20:FF:000031">
    <property type="entry name" value="D-alanine--D-alanine ligase"/>
    <property type="match status" value="1"/>
</dbReference>
<dbReference type="Gene3D" id="3.40.50.20">
    <property type="match status" value="1"/>
</dbReference>
<dbReference type="Gene3D" id="3.30.1490.20">
    <property type="entry name" value="ATP-grasp fold, A domain"/>
    <property type="match status" value="1"/>
</dbReference>
<dbReference type="Gene3D" id="3.30.470.20">
    <property type="entry name" value="ATP-grasp fold, B domain"/>
    <property type="match status" value="1"/>
</dbReference>
<dbReference type="HAMAP" id="MF_00047">
    <property type="entry name" value="Dala_Dala_lig"/>
    <property type="match status" value="1"/>
</dbReference>
<dbReference type="InterPro" id="IPR011761">
    <property type="entry name" value="ATP-grasp"/>
</dbReference>
<dbReference type="InterPro" id="IPR013815">
    <property type="entry name" value="ATP_grasp_subdomain_1"/>
</dbReference>
<dbReference type="InterPro" id="IPR000291">
    <property type="entry name" value="D-Ala_lig_Van_CS"/>
</dbReference>
<dbReference type="InterPro" id="IPR005905">
    <property type="entry name" value="D_ala_D_ala"/>
</dbReference>
<dbReference type="InterPro" id="IPR011095">
    <property type="entry name" value="Dala_Dala_lig_C"/>
</dbReference>
<dbReference type="InterPro" id="IPR011127">
    <property type="entry name" value="Dala_Dala_lig_N"/>
</dbReference>
<dbReference type="InterPro" id="IPR016185">
    <property type="entry name" value="PreATP-grasp_dom_sf"/>
</dbReference>
<dbReference type="NCBIfam" id="TIGR01205">
    <property type="entry name" value="D_ala_D_alaTIGR"/>
    <property type="match status" value="1"/>
</dbReference>
<dbReference type="NCBIfam" id="NF002378">
    <property type="entry name" value="PRK01372.1"/>
    <property type="match status" value="1"/>
</dbReference>
<dbReference type="PANTHER" id="PTHR23132">
    <property type="entry name" value="D-ALANINE--D-ALANINE LIGASE"/>
    <property type="match status" value="1"/>
</dbReference>
<dbReference type="PANTHER" id="PTHR23132:SF23">
    <property type="entry name" value="D-ALANINE--D-ALANINE LIGASE B"/>
    <property type="match status" value="1"/>
</dbReference>
<dbReference type="Pfam" id="PF07478">
    <property type="entry name" value="Dala_Dala_lig_C"/>
    <property type="match status" value="1"/>
</dbReference>
<dbReference type="Pfam" id="PF01820">
    <property type="entry name" value="Dala_Dala_lig_N"/>
    <property type="match status" value="1"/>
</dbReference>
<dbReference type="PIRSF" id="PIRSF039102">
    <property type="entry name" value="Ddl/VanB"/>
    <property type="match status" value="1"/>
</dbReference>
<dbReference type="SMART" id="SM01209">
    <property type="entry name" value="GARS_A"/>
    <property type="match status" value="1"/>
</dbReference>
<dbReference type="SUPFAM" id="SSF56059">
    <property type="entry name" value="Glutathione synthetase ATP-binding domain-like"/>
    <property type="match status" value="1"/>
</dbReference>
<dbReference type="SUPFAM" id="SSF52440">
    <property type="entry name" value="PreATP-grasp domain"/>
    <property type="match status" value="1"/>
</dbReference>
<dbReference type="PROSITE" id="PS50975">
    <property type="entry name" value="ATP_GRASP"/>
    <property type="match status" value="1"/>
</dbReference>
<dbReference type="PROSITE" id="PS00843">
    <property type="entry name" value="DALA_DALA_LIGASE_1"/>
    <property type="match status" value="1"/>
</dbReference>
<dbReference type="PROSITE" id="PS00844">
    <property type="entry name" value="DALA_DALA_LIGASE_2"/>
    <property type="match status" value="1"/>
</dbReference>
<sequence length="301" mass="33595">MLLWAGYASEKQVSIMTGNEMIAHLDKNKYEIVPITLNEKMDLIEKAKDIDFALLALHGKYGEDGTVQGTLESLGIPYSGSNMLSSSICMDKNISKKILRYEGVETPDWIELTKMEDLNLDELDKLGFPLVVKPNSGGSSVGVKIVYNKNELISMLETVFEWDSEVVIEKYIKGDEITCSILDGKQLPIVSIRHAAEFFDYNAKYDDTSTVEEVIELPAQIKERVNKASLTCYKALKCSVYARVDMMVKDGIPYVMEINTLPGMTQSSLLPKSAEAAGISYSKLLDMIIETSLKVRNEEGF</sequence>
<organism>
    <name type="scientific">Bacillus cereus (strain ATCC 14579 / DSM 31 / CCUG 7414 / JCM 2152 / NBRC 15305 / NCIMB 9373 / NCTC 2599 / NRRL B-3711)</name>
    <dbReference type="NCBI Taxonomy" id="226900"/>
    <lineage>
        <taxon>Bacteria</taxon>
        <taxon>Bacillati</taxon>
        <taxon>Bacillota</taxon>
        <taxon>Bacilli</taxon>
        <taxon>Bacillales</taxon>
        <taxon>Bacillaceae</taxon>
        <taxon>Bacillus</taxon>
        <taxon>Bacillus cereus group</taxon>
    </lineage>
</organism>
<proteinExistence type="inferred from homology"/>
<accession>Q81D33</accession>
<comment type="function">
    <text evidence="2">Cell wall formation.</text>
</comment>
<comment type="catalytic activity">
    <reaction evidence="2">
        <text>2 D-alanine + ATP = D-alanyl-D-alanine + ADP + phosphate + H(+)</text>
        <dbReference type="Rhea" id="RHEA:11224"/>
        <dbReference type="ChEBI" id="CHEBI:15378"/>
        <dbReference type="ChEBI" id="CHEBI:30616"/>
        <dbReference type="ChEBI" id="CHEBI:43474"/>
        <dbReference type="ChEBI" id="CHEBI:57416"/>
        <dbReference type="ChEBI" id="CHEBI:57822"/>
        <dbReference type="ChEBI" id="CHEBI:456216"/>
        <dbReference type="EC" id="6.3.2.4"/>
    </reaction>
</comment>
<comment type="cofactor">
    <cofactor evidence="1">
        <name>Mg(2+)</name>
        <dbReference type="ChEBI" id="CHEBI:18420"/>
    </cofactor>
    <cofactor evidence="1">
        <name>Mn(2+)</name>
        <dbReference type="ChEBI" id="CHEBI:29035"/>
    </cofactor>
    <text evidence="1">Binds 2 magnesium or manganese ions per subunit.</text>
</comment>
<comment type="pathway">
    <text evidence="2">Cell wall biogenesis; peptidoglycan biosynthesis.</text>
</comment>
<comment type="subcellular location">
    <subcellularLocation>
        <location evidence="2">Cytoplasm</location>
    </subcellularLocation>
</comment>
<comment type="similarity">
    <text evidence="2">Belongs to the D-alanine--D-alanine ligase family.</text>
</comment>